<reference key="1">
    <citation type="journal article" date="2011" name="J. Bacteriol.">
        <title>Comparative genomics of 28 Salmonella enterica isolates: evidence for CRISPR-mediated adaptive sublineage evolution.</title>
        <authorList>
            <person name="Fricke W.F."/>
            <person name="Mammel M.K."/>
            <person name="McDermott P.F."/>
            <person name="Tartera C."/>
            <person name="White D.G."/>
            <person name="Leclerc J.E."/>
            <person name="Ravel J."/>
            <person name="Cebula T.A."/>
        </authorList>
    </citation>
    <scope>NUCLEOTIDE SEQUENCE [LARGE SCALE GENOMIC DNA]</scope>
    <source>
        <strain>CT_02021853</strain>
    </source>
</reference>
<organism>
    <name type="scientific">Salmonella dublin (strain CT_02021853)</name>
    <dbReference type="NCBI Taxonomy" id="439851"/>
    <lineage>
        <taxon>Bacteria</taxon>
        <taxon>Pseudomonadati</taxon>
        <taxon>Pseudomonadota</taxon>
        <taxon>Gammaproteobacteria</taxon>
        <taxon>Enterobacterales</taxon>
        <taxon>Enterobacteriaceae</taxon>
        <taxon>Salmonella</taxon>
    </lineage>
</organism>
<name>NUSB_SALDC</name>
<sequence>MKPAARRRARECAVQALYSWQLSQNDIADVEYQFLAEQDVKDVDVLYFRELLSGVATNSAYLDGLMKPYLSRLLEELGQVEKAVLRIALFELSKRSDVPYKVAINEAIELAKTFGAEDSHKFVNGVLDKAAPVIRPNKK</sequence>
<protein>
    <recommendedName>
        <fullName evidence="1">Transcription antitermination protein NusB</fullName>
    </recommendedName>
    <alternativeName>
        <fullName evidence="1">Antitermination factor NusB</fullName>
    </alternativeName>
</protein>
<dbReference type="EMBL" id="CP001144">
    <property type="protein sequence ID" value="ACH74879.1"/>
    <property type="molecule type" value="Genomic_DNA"/>
</dbReference>
<dbReference type="RefSeq" id="WP_000801129.1">
    <property type="nucleotide sequence ID" value="NC_011205.1"/>
</dbReference>
<dbReference type="SMR" id="B5FKS3"/>
<dbReference type="GeneID" id="89550189"/>
<dbReference type="KEGG" id="sed:SeD_A0459"/>
<dbReference type="HOGENOM" id="CLU_087843_4_1_6"/>
<dbReference type="Proteomes" id="UP000008322">
    <property type="component" value="Chromosome"/>
</dbReference>
<dbReference type="GO" id="GO:0005829">
    <property type="term" value="C:cytosol"/>
    <property type="evidence" value="ECO:0007669"/>
    <property type="project" value="TreeGrafter"/>
</dbReference>
<dbReference type="GO" id="GO:0003723">
    <property type="term" value="F:RNA binding"/>
    <property type="evidence" value="ECO:0007669"/>
    <property type="project" value="UniProtKB-UniRule"/>
</dbReference>
<dbReference type="GO" id="GO:0006353">
    <property type="term" value="P:DNA-templated transcription termination"/>
    <property type="evidence" value="ECO:0007669"/>
    <property type="project" value="UniProtKB-UniRule"/>
</dbReference>
<dbReference type="GO" id="GO:0031564">
    <property type="term" value="P:transcription antitermination"/>
    <property type="evidence" value="ECO:0007669"/>
    <property type="project" value="UniProtKB-KW"/>
</dbReference>
<dbReference type="CDD" id="cd00619">
    <property type="entry name" value="Terminator_NusB"/>
    <property type="match status" value="1"/>
</dbReference>
<dbReference type="FunFam" id="1.10.940.10:FF:000001">
    <property type="entry name" value="Transcription antitermination factor NusB"/>
    <property type="match status" value="1"/>
</dbReference>
<dbReference type="Gene3D" id="1.10.940.10">
    <property type="entry name" value="NusB-like"/>
    <property type="match status" value="1"/>
</dbReference>
<dbReference type="HAMAP" id="MF_00073">
    <property type="entry name" value="NusB"/>
    <property type="match status" value="1"/>
</dbReference>
<dbReference type="InterPro" id="IPR035926">
    <property type="entry name" value="NusB-like_sf"/>
</dbReference>
<dbReference type="InterPro" id="IPR011605">
    <property type="entry name" value="NusB_fam"/>
</dbReference>
<dbReference type="InterPro" id="IPR006027">
    <property type="entry name" value="NusB_RsmB_TIM44"/>
</dbReference>
<dbReference type="NCBIfam" id="TIGR01951">
    <property type="entry name" value="nusB"/>
    <property type="match status" value="1"/>
</dbReference>
<dbReference type="PANTHER" id="PTHR11078:SF3">
    <property type="entry name" value="ANTITERMINATION NUSB DOMAIN-CONTAINING PROTEIN"/>
    <property type="match status" value="1"/>
</dbReference>
<dbReference type="PANTHER" id="PTHR11078">
    <property type="entry name" value="N UTILIZATION SUBSTANCE PROTEIN B-RELATED"/>
    <property type="match status" value="1"/>
</dbReference>
<dbReference type="Pfam" id="PF01029">
    <property type="entry name" value="NusB"/>
    <property type="match status" value="1"/>
</dbReference>
<dbReference type="SUPFAM" id="SSF48013">
    <property type="entry name" value="NusB-like"/>
    <property type="match status" value="1"/>
</dbReference>
<keyword id="KW-0694">RNA-binding</keyword>
<keyword id="KW-0804">Transcription</keyword>
<keyword id="KW-0889">Transcription antitermination</keyword>
<keyword id="KW-0805">Transcription regulation</keyword>
<accession>B5FKS3</accession>
<proteinExistence type="inferred from homology"/>
<feature type="chain" id="PRO_1000092580" description="Transcription antitermination protein NusB">
    <location>
        <begin position="1"/>
        <end position="139"/>
    </location>
</feature>
<evidence type="ECO:0000255" key="1">
    <source>
        <dbReference type="HAMAP-Rule" id="MF_00073"/>
    </source>
</evidence>
<comment type="function">
    <text evidence="1">Involved in transcription antitermination. Required for transcription of ribosomal RNA (rRNA) genes. Binds specifically to the boxA antiterminator sequence of the ribosomal RNA (rrn) operons.</text>
</comment>
<comment type="similarity">
    <text evidence="1">Belongs to the NusB family.</text>
</comment>
<gene>
    <name evidence="1" type="primary">nusB</name>
    <name type="ordered locus">SeD_A0459</name>
</gene>